<dbReference type="EMBL" id="U30821">
    <property type="protein sequence ID" value="AAA81173.1"/>
    <property type="molecule type" value="Genomic_DNA"/>
</dbReference>
<dbReference type="EMBL" id="U30821">
    <property type="protein sequence ID" value="AAA81293.1"/>
    <property type="molecule type" value="Genomic_DNA"/>
</dbReference>
<dbReference type="PIR" id="T06830">
    <property type="entry name" value="T06830"/>
</dbReference>
<dbReference type="RefSeq" id="NP_043142.1">
    <property type="nucleotide sequence ID" value="NC_001675.1"/>
</dbReference>
<dbReference type="RefSeq" id="NP_043262.1">
    <property type="nucleotide sequence ID" value="NC_001675.1"/>
</dbReference>
<dbReference type="SMR" id="Q37761"/>
<dbReference type="GeneID" id="801546"/>
<dbReference type="GeneID" id="801651"/>
<dbReference type="GO" id="GO:0009842">
    <property type="term" value="C:cyanelle"/>
    <property type="evidence" value="ECO:0007669"/>
    <property type="project" value="UniProtKB-SubCell"/>
</dbReference>
<dbReference type="GO" id="GO:0005524">
    <property type="term" value="F:ATP binding"/>
    <property type="evidence" value="ECO:0007669"/>
    <property type="project" value="InterPro"/>
</dbReference>
<dbReference type="GO" id="GO:0046872">
    <property type="term" value="F:metal ion binding"/>
    <property type="evidence" value="ECO:0007669"/>
    <property type="project" value="TreeGrafter"/>
</dbReference>
<dbReference type="GO" id="GO:0044183">
    <property type="term" value="F:protein folding chaperone"/>
    <property type="evidence" value="ECO:0007669"/>
    <property type="project" value="InterPro"/>
</dbReference>
<dbReference type="GO" id="GO:0051087">
    <property type="term" value="F:protein-folding chaperone binding"/>
    <property type="evidence" value="ECO:0007669"/>
    <property type="project" value="TreeGrafter"/>
</dbReference>
<dbReference type="GO" id="GO:0051082">
    <property type="term" value="F:unfolded protein binding"/>
    <property type="evidence" value="ECO:0007669"/>
    <property type="project" value="TreeGrafter"/>
</dbReference>
<dbReference type="GO" id="GO:0051085">
    <property type="term" value="P:chaperone cofactor-dependent protein refolding"/>
    <property type="evidence" value="ECO:0007669"/>
    <property type="project" value="TreeGrafter"/>
</dbReference>
<dbReference type="CDD" id="cd00320">
    <property type="entry name" value="cpn10"/>
    <property type="match status" value="1"/>
</dbReference>
<dbReference type="FunFam" id="2.30.33.40:FF:000001">
    <property type="entry name" value="10 kDa chaperonin"/>
    <property type="match status" value="1"/>
</dbReference>
<dbReference type="Gene3D" id="2.30.33.40">
    <property type="entry name" value="GroES chaperonin"/>
    <property type="match status" value="1"/>
</dbReference>
<dbReference type="HAMAP" id="MF_00580">
    <property type="entry name" value="CH10"/>
    <property type="match status" value="1"/>
</dbReference>
<dbReference type="InterPro" id="IPR020818">
    <property type="entry name" value="Chaperonin_GroES"/>
</dbReference>
<dbReference type="InterPro" id="IPR037124">
    <property type="entry name" value="Chaperonin_GroES_sf"/>
</dbReference>
<dbReference type="InterPro" id="IPR018369">
    <property type="entry name" value="Chaprnonin_Cpn10_CS"/>
</dbReference>
<dbReference type="InterPro" id="IPR011032">
    <property type="entry name" value="GroES-like_sf"/>
</dbReference>
<dbReference type="NCBIfam" id="NF001530">
    <property type="entry name" value="PRK00364.1-6"/>
    <property type="match status" value="1"/>
</dbReference>
<dbReference type="NCBIfam" id="NF001531">
    <property type="entry name" value="PRK00364.2-2"/>
    <property type="match status" value="1"/>
</dbReference>
<dbReference type="NCBIfam" id="NF001533">
    <property type="entry name" value="PRK00364.2-4"/>
    <property type="match status" value="1"/>
</dbReference>
<dbReference type="PANTHER" id="PTHR10772">
    <property type="entry name" value="10 KDA HEAT SHOCK PROTEIN"/>
    <property type="match status" value="1"/>
</dbReference>
<dbReference type="PANTHER" id="PTHR10772:SF58">
    <property type="entry name" value="CO-CHAPERONIN GROES"/>
    <property type="match status" value="1"/>
</dbReference>
<dbReference type="Pfam" id="PF00166">
    <property type="entry name" value="Cpn10"/>
    <property type="match status" value="1"/>
</dbReference>
<dbReference type="PRINTS" id="PR00297">
    <property type="entry name" value="CHAPERONIN10"/>
</dbReference>
<dbReference type="SMART" id="SM00883">
    <property type="entry name" value="Cpn10"/>
    <property type="match status" value="1"/>
</dbReference>
<dbReference type="SUPFAM" id="SSF50129">
    <property type="entry name" value="GroES-like"/>
    <property type="match status" value="1"/>
</dbReference>
<dbReference type="PROSITE" id="PS00681">
    <property type="entry name" value="CHAPERONINS_CPN10"/>
    <property type="match status" value="1"/>
</dbReference>
<name>CH10_CYAPA</name>
<geneLocation type="cyanelle"/>
<feature type="chain" id="PRO_0000174915" description="Co-chaperonin GroES">
    <location>
        <begin position="1"/>
        <end position="103"/>
    </location>
</feature>
<accession>Q37761</accession>
<keyword id="KW-0143">Chaperone</keyword>
<keyword id="KW-0194">Cyanelle</keyword>
<keyword id="KW-0934">Plastid</keyword>
<gene>
    <name evidence="1" type="primary">groES1</name>
    <name type="synonym">groES-A</name>
    <name type="synonym">groS-A</name>
    <name evidence="1" type="synonym">groS1</name>
</gene>
<gene>
    <name evidence="1" type="primary">groES2</name>
    <name type="synonym">groES-B</name>
    <name type="synonym">groS-B</name>
    <name evidence="1" type="synonym">groS2</name>
</gene>
<proteinExistence type="inferred from homology"/>
<organism>
    <name type="scientific">Cyanophora paradoxa</name>
    <dbReference type="NCBI Taxonomy" id="2762"/>
    <lineage>
        <taxon>Eukaryota</taxon>
        <taxon>Glaucocystophyceae</taxon>
        <taxon>Cyanophoraceae</taxon>
        <taxon>Cyanophora</taxon>
    </lineage>
</organism>
<reference key="1">
    <citation type="journal article" date="1995" name="Plant Mol. Biol. Rep.">
        <title>Nucleotide sequence of the cyanelle DNA from Cyanophora paradoxa.</title>
        <authorList>
            <person name="Stirewalt V.L."/>
            <person name="Michalowski C.B."/>
            <person name="Loeffelhardt W."/>
            <person name="Bohnert H.J."/>
            <person name="Bryant D.A."/>
        </authorList>
    </citation>
    <scope>NUCLEOTIDE SEQUENCE [LARGE SCALE GENOMIC DNA]</scope>
    <source>
        <strain>UTEX LB 555 / Pringsheim</strain>
    </source>
</reference>
<reference key="2">
    <citation type="book" date="1997" name="Eukaryotism and symbiosis">
        <title>The complete sequence of the cyanelle genome of Cyanophora paradoxa: the genetic complexity of a primitive plastid.</title>
        <editorList>
            <person name="Schenk H.E.A."/>
            <person name="Herrmann R."/>
            <person name="Jeon K.W."/>
            <person name="Mueller N.E."/>
            <person name="Schwemmler W."/>
        </editorList>
        <authorList>
            <person name="Loeffelhardt W."/>
            <person name="Stirewalt V.L."/>
            <person name="Michalowski C.B."/>
            <person name="Annarella M."/>
            <person name="Farley J.Y."/>
            <person name="Schluchter W.M."/>
            <person name="Chung S."/>
            <person name="Newmann-Spallart C."/>
            <person name="Steiner J.M."/>
            <person name="Jakowitsch J."/>
            <person name="Bohnert H.J."/>
            <person name="Bryant D.A."/>
        </authorList>
    </citation>
    <scope>NUCLEOTIDE SEQUENCE [LARGE SCALE GENOMIC DNA]</scope>
    <source>
        <strain>UTEX LB 555 / Pringsheim</strain>
    </source>
</reference>
<evidence type="ECO:0000255" key="1">
    <source>
        <dbReference type="HAMAP-Rule" id="MF_00580"/>
    </source>
</evidence>
<evidence type="ECO:0000305" key="2"/>
<comment type="function">
    <text evidence="1">Together with the chaperonin GroEL, plays an essential role in assisting protein folding. The GroEL-GroES system forms a nano-cage that allows encapsulation of the non-native substrate proteins and provides a physical environment optimized to promote and accelerate protein folding. GroES binds to the apical surface of the GroEL ring, thereby capping the opening of the GroEL channel.</text>
</comment>
<comment type="subunit">
    <text evidence="1">Heptamer of 7 subunits arranged in a ring. Interacts with the chaperonin GroEL.</text>
</comment>
<comment type="subcellular location">
    <subcellularLocation>
        <location>Plastid</location>
        <location>Cyanelle</location>
    </subcellularLocation>
</comment>
<comment type="similarity">
    <text evidence="1 2">Belongs to the GroES chaperonin family.</text>
</comment>
<protein>
    <recommendedName>
        <fullName evidence="1">Co-chaperonin GroES</fullName>
    </recommendedName>
    <alternativeName>
        <fullName evidence="1">10 kDa chaperonin</fullName>
    </alternativeName>
    <alternativeName>
        <fullName evidence="1">Chaperonin-10</fullName>
        <shortName evidence="1">Cpn10</shortName>
    </alternativeName>
</protein>
<sequence length="103" mass="11240">MATVTLNVKTVRPLGERVLVKVSQSEEKTAGGILLPDTVKEKPQIGEIIAEGPGRRNDDGSFQPLEVTVNSKVLYSKYAGTDIKLENEEYVLLSEKDILAIIA</sequence>